<keyword id="KW-0963">Cytoplasm</keyword>
<keyword id="KW-0396">Initiation factor</keyword>
<keyword id="KW-0648">Protein biosynthesis</keyword>
<keyword id="KW-0694">RNA-binding</keyword>
<keyword id="KW-0699">rRNA-binding</keyword>
<accession>Q5PGJ4</accession>
<reference key="1">
    <citation type="journal article" date="2004" name="Nat. Genet.">
        <title>Comparison of genome degradation in Paratyphi A and Typhi, human-restricted serovars of Salmonella enterica that cause typhoid.</title>
        <authorList>
            <person name="McClelland M."/>
            <person name="Sanderson K.E."/>
            <person name="Clifton S.W."/>
            <person name="Latreille P."/>
            <person name="Porwollik S."/>
            <person name="Sabo A."/>
            <person name="Meyer R."/>
            <person name="Bieri T."/>
            <person name="Ozersky P."/>
            <person name="McLellan M."/>
            <person name="Harkins C.R."/>
            <person name="Wang C."/>
            <person name="Nguyen C."/>
            <person name="Berghoff A."/>
            <person name="Elliott G."/>
            <person name="Kohlberg S."/>
            <person name="Strong C."/>
            <person name="Du F."/>
            <person name="Carter J."/>
            <person name="Kremizki C."/>
            <person name="Layman D."/>
            <person name="Leonard S."/>
            <person name="Sun H."/>
            <person name="Fulton L."/>
            <person name="Nash W."/>
            <person name="Miner T."/>
            <person name="Minx P."/>
            <person name="Delehaunty K."/>
            <person name="Fronick C."/>
            <person name="Magrini V."/>
            <person name="Nhan M."/>
            <person name="Warren W."/>
            <person name="Florea L."/>
            <person name="Spieth J."/>
            <person name="Wilson R.K."/>
        </authorList>
    </citation>
    <scope>NUCLEOTIDE SEQUENCE [LARGE SCALE GENOMIC DNA]</scope>
    <source>
        <strain>ATCC 9150 / SARB42</strain>
    </source>
</reference>
<proteinExistence type="inferred from homology"/>
<name>IF1_SALPA</name>
<sequence>MAKEDNIEMQGTVLETLPNTMFRVELENGHMVTAHISGKMRKNYIRILTGDKVTVELTPYDLSKGRIVFRSR</sequence>
<evidence type="ECO:0000255" key="1">
    <source>
        <dbReference type="HAMAP-Rule" id="MF_00075"/>
    </source>
</evidence>
<comment type="function">
    <text evidence="1">One of the essential components for the initiation of protein synthesis. Stabilizes the binding of IF-2 and IF-3 on the 30S subunit to which N-formylmethionyl-tRNA(fMet) subsequently binds. Helps modulate mRNA selection, yielding the 30S pre-initiation complex (PIC). Upon addition of the 50S ribosomal subunit IF-1, IF-2 and IF-3 are released leaving the mature 70S translation initiation complex.</text>
</comment>
<comment type="subunit">
    <text evidence="1">Component of the 30S ribosomal translation pre-initiation complex which assembles on the 30S ribosome in the order IF-2 and IF-3, IF-1 and N-formylmethionyl-tRNA(fMet); mRNA recruitment can occur at any time during PIC assembly.</text>
</comment>
<comment type="subcellular location">
    <subcellularLocation>
        <location evidence="1">Cytoplasm</location>
    </subcellularLocation>
</comment>
<comment type="similarity">
    <text evidence="1">Belongs to the IF-1 family.</text>
</comment>
<protein>
    <recommendedName>
        <fullName evidence="1">Translation initiation factor IF-1</fullName>
    </recommendedName>
</protein>
<organism>
    <name type="scientific">Salmonella paratyphi A (strain ATCC 9150 / SARB42)</name>
    <dbReference type="NCBI Taxonomy" id="295319"/>
    <lineage>
        <taxon>Bacteria</taxon>
        <taxon>Pseudomonadati</taxon>
        <taxon>Pseudomonadota</taxon>
        <taxon>Gammaproteobacteria</taxon>
        <taxon>Enterobacterales</taxon>
        <taxon>Enterobacteriaceae</taxon>
        <taxon>Salmonella</taxon>
    </lineage>
</organism>
<gene>
    <name evidence="1" type="primary">infA</name>
    <name type="ordered locus">SPA1845</name>
</gene>
<dbReference type="EMBL" id="CP000026">
    <property type="protein sequence ID" value="AAV77758.1"/>
    <property type="molecule type" value="Genomic_DNA"/>
</dbReference>
<dbReference type="RefSeq" id="WP_001040186.1">
    <property type="nucleotide sequence ID" value="NC_006511.1"/>
</dbReference>
<dbReference type="SMR" id="Q5PGJ4"/>
<dbReference type="KEGG" id="spt:SPA1845"/>
<dbReference type="HOGENOM" id="CLU_151267_1_0_6"/>
<dbReference type="Proteomes" id="UP000008185">
    <property type="component" value="Chromosome"/>
</dbReference>
<dbReference type="GO" id="GO:0005829">
    <property type="term" value="C:cytosol"/>
    <property type="evidence" value="ECO:0007669"/>
    <property type="project" value="TreeGrafter"/>
</dbReference>
<dbReference type="GO" id="GO:0043022">
    <property type="term" value="F:ribosome binding"/>
    <property type="evidence" value="ECO:0007669"/>
    <property type="project" value="UniProtKB-UniRule"/>
</dbReference>
<dbReference type="GO" id="GO:0019843">
    <property type="term" value="F:rRNA binding"/>
    <property type="evidence" value="ECO:0007669"/>
    <property type="project" value="UniProtKB-UniRule"/>
</dbReference>
<dbReference type="GO" id="GO:0003743">
    <property type="term" value="F:translation initiation factor activity"/>
    <property type="evidence" value="ECO:0007669"/>
    <property type="project" value="UniProtKB-UniRule"/>
</dbReference>
<dbReference type="CDD" id="cd04451">
    <property type="entry name" value="S1_IF1"/>
    <property type="match status" value="1"/>
</dbReference>
<dbReference type="FunFam" id="2.40.50.140:FF:000002">
    <property type="entry name" value="Translation initiation factor IF-1"/>
    <property type="match status" value="1"/>
</dbReference>
<dbReference type="Gene3D" id="2.40.50.140">
    <property type="entry name" value="Nucleic acid-binding proteins"/>
    <property type="match status" value="1"/>
</dbReference>
<dbReference type="HAMAP" id="MF_00075">
    <property type="entry name" value="IF_1"/>
    <property type="match status" value="1"/>
</dbReference>
<dbReference type="InterPro" id="IPR012340">
    <property type="entry name" value="NA-bd_OB-fold"/>
</dbReference>
<dbReference type="InterPro" id="IPR006196">
    <property type="entry name" value="RNA-binding_domain_S1_IF1"/>
</dbReference>
<dbReference type="InterPro" id="IPR003029">
    <property type="entry name" value="S1_domain"/>
</dbReference>
<dbReference type="InterPro" id="IPR004368">
    <property type="entry name" value="TIF_IF1"/>
</dbReference>
<dbReference type="NCBIfam" id="TIGR00008">
    <property type="entry name" value="infA"/>
    <property type="match status" value="1"/>
</dbReference>
<dbReference type="PANTHER" id="PTHR33370">
    <property type="entry name" value="TRANSLATION INITIATION FACTOR IF-1, CHLOROPLASTIC"/>
    <property type="match status" value="1"/>
</dbReference>
<dbReference type="PANTHER" id="PTHR33370:SF1">
    <property type="entry name" value="TRANSLATION INITIATION FACTOR IF-1, CHLOROPLASTIC"/>
    <property type="match status" value="1"/>
</dbReference>
<dbReference type="Pfam" id="PF01176">
    <property type="entry name" value="eIF-1a"/>
    <property type="match status" value="1"/>
</dbReference>
<dbReference type="SMART" id="SM00316">
    <property type="entry name" value="S1"/>
    <property type="match status" value="1"/>
</dbReference>
<dbReference type="SUPFAM" id="SSF50249">
    <property type="entry name" value="Nucleic acid-binding proteins"/>
    <property type="match status" value="1"/>
</dbReference>
<dbReference type="PROSITE" id="PS50832">
    <property type="entry name" value="S1_IF1_TYPE"/>
    <property type="match status" value="1"/>
</dbReference>
<feature type="chain" id="PRO_0000095858" description="Translation initiation factor IF-1">
    <location>
        <begin position="1"/>
        <end position="72"/>
    </location>
</feature>
<feature type="domain" description="S1-like" evidence="1">
    <location>
        <begin position="1"/>
        <end position="72"/>
    </location>
</feature>